<proteinExistence type="inferred from homology"/>
<feature type="chain" id="PRO_1000069927" description="Chromosome partition protein MukF">
    <location>
        <begin position="1"/>
        <end position="440"/>
    </location>
</feature>
<feature type="region of interest" description="Leucine-zipper">
    <location>
        <begin position="208"/>
        <end position="236"/>
    </location>
</feature>
<gene>
    <name evidence="1" type="primary">mukF</name>
    <name type="ordered locus">EcHS_A1029</name>
</gene>
<reference key="1">
    <citation type="journal article" date="2008" name="J. Bacteriol.">
        <title>The pangenome structure of Escherichia coli: comparative genomic analysis of E. coli commensal and pathogenic isolates.</title>
        <authorList>
            <person name="Rasko D.A."/>
            <person name="Rosovitz M.J."/>
            <person name="Myers G.S.A."/>
            <person name="Mongodin E.F."/>
            <person name="Fricke W.F."/>
            <person name="Gajer P."/>
            <person name="Crabtree J."/>
            <person name="Sebaihia M."/>
            <person name="Thomson N.R."/>
            <person name="Chaudhuri R."/>
            <person name="Henderson I.R."/>
            <person name="Sperandio V."/>
            <person name="Ravel J."/>
        </authorList>
    </citation>
    <scope>NUCLEOTIDE SEQUENCE [LARGE SCALE GENOMIC DNA]</scope>
    <source>
        <strain>HS</strain>
    </source>
</reference>
<dbReference type="EMBL" id="CP000802">
    <property type="protein sequence ID" value="ABV05378.1"/>
    <property type="molecule type" value="Genomic_DNA"/>
</dbReference>
<dbReference type="RefSeq" id="WP_001288852.1">
    <property type="nucleotide sequence ID" value="NC_009800.1"/>
</dbReference>
<dbReference type="SMR" id="A7ZYM4"/>
<dbReference type="KEGG" id="ecx:EcHS_A1029"/>
<dbReference type="HOGENOM" id="CLU_049853_0_0_6"/>
<dbReference type="GO" id="GO:0005737">
    <property type="term" value="C:cytoplasm"/>
    <property type="evidence" value="ECO:0007669"/>
    <property type="project" value="UniProtKB-UniRule"/>
</dbReference>
<dbReference type="GO" id="GO:0009295">
    <property type="term" value="C:nucleoid"/>
    <property type="evidence" value="ECO:0007669"/>
    <property type="project" value="UniProtKB-SubCell"/>
</dbReference>
<dbReference type="GO" id="GO:0005509">
    <property type="term" value="F:calcium ion binding"/>
    <property type="evidence" value="ECO:0007669"/>
    <property type="project" value="UniProtKB-UniRule"/>
</dbReference>
<dbReference type="GO" id="GO:0051301">
    <property type="term" value="P:cell division"/>
    <property type="evidence" value="ECO:0007669"/>
    <property type="project" value="UniProtKB-KW"/>
</dbReference>
<dbReference type="GO" id="GO:0030261">
    <property type="term" value="P:chromosome condensation"/>
    <property type="evidence" value="ECO:0007669"/>
    <property type="project" value="UniProtKB-KW"/>
</dbReference>
<dbReference type="GO" id="GO:0007059">
    <property type="term" value="P:chromosome segregation"/>
    <property type="evidence" value="ECO:0007669"/>
    <property type="project" value="UniProtKB-UniRule"/>
</dbReference>
<dbReference type="GO" id="GO:0006260">
    <property type="term" value="P:DNA replication"/>
    <property type="evidence" value="ECO:0007669"/>
    <property type="project" value="UniProtKB-UniRule"/>
</dbReference>
<dbReference type="CDD" id="cd16337">
    <property type="entry name" value="MukF_C"/>
    <property type="match status" value="1"/>
</dbReference>
<dbReference type="CDD" id="cd16335">
    <property type="entry name" value="MukF_N"/>
    <property type="match status" value="1"/>
</dbReference>
<dbReference type="Gene3D" id="1.20.58.590">
    <property type="entry name" value="Chromosome partition protein MukF, middle domain"/>
    <property type="match status" value="1"/>
</dbReference>
<dbReference type="Gene3D" id="1.10.225.40">
    <property type="entry name" value="MukF, C-terminal domain"/>
    <property type="match status" value="1"/>
</dbReference>
<dbReference type="Gene3D" id="1.10.10.10">
    <property type="entry name" value="Winged helix-like DNA-binding domain superfamily/Winged helix DNA-binding domain"/>
    <property type="match status" value="1"/>
</dbReference>
<dbReference type="HAMAP" id="MF_01803">
    <property type="entry name" value="MukF"/>
    <property type="match status" value="1"/>
</dbReference>
<dbReference type="InterPro" id="IPR005582">
    <property type="entry name" value="Chromosome_partition_MukF"/>
</dbReference>
<dbReference type="InterPro" id="IPR033441">
    <property type="entry name" value="MukF_C"/>
</dbReference>
<dbReference type="InterPro" id="IPR038198">
    <property type="entry name" value="MukF_C_sf"/>
</dbReference>
<dbReference type="InterPro" id="IPR033440">
    <property type="entry name" value="MukF_M"/>
</dbReference>
<dbReference type="InterPro" id="IPR036141">
    <property type="entry name" value="MukF_M_sp"/>
</dbReference>
<dbReference type="InterPro" id="IPR033439">
    <property type="entry name" value="MukF_WHTH"/>
</dbReference>
<dbReference type="InterPro" id="IPR036388">
    <property type="entry name" value="WH-like_DNA-bd_sf"/>
</dbReference>
<dbReference type="InterPro" id="IPR036390">
    <property type="entry name" value="WH_DNA-bd_sf"/>
</dbReference>
<dbReference type="NCBIfam" id="NF003615">
    <property type="entry name" value="PRK05260.1"/>
    <property type="match status" value="1"/>
</dbReference>
<dbReference type="Pfam" id="PF03882">
    <property type="entry name" value="KicB"/>
    <property type="match status" value="1"/>
</dbReference>
<dbReference type="Pfam" id="PF17193">
    <property type="entry name" value="MukF_C"/>
    <property type="match status" value="1"/>
</dbReference>
<dbReference type="Pfam" id="PF17192">
    <property type="entry name" value="MukF_M"/>
    <property type="match status" value="1"/>
</dbReference>
<dbReference type="PIRSF" id="PIRSF018282">
    <property type="entry name" value="MukF"/>
    <property type="match status" value="1"/>
</dbReference>
<dbReference type="SUPFAM" id="SSF140570">
    <property type="entry name" value="MukF C-terminal domain-like"/>
    <property type="match status" value="1"/>
</dbReference>
<dbReference type="SUPFAM" id="SSF46785">
    <property type="entry name" value="Winged helix' DNA-binding domain"/>
    <property type="match status" value="1"/>
</dbReference>
<organism>
    <name type="scientific">Escherichia coli O9:H4 (strain HS)</name>
    <dbReference type="NCBI Taxonomy" id="331112"/>
    <lineage>
        <taxon>Bacteria</taxon>
        <taxon>Pseudomonadati</taxon>
        <taxon>Pseudomonadota</taxon>
        <taxon>Gammaproteobacteria</taxon>
        <taxon>Enterobacterales</taxon>
        <taxon>Enterobacteriaceae</taxon>
        <taxon>Escherichia</taxon>
    </lineage>
</organism>
<comment type="function">
    <text evidence="1">Involved in chromosome condensation, segregation and cell cycle progression. May participate in facilitating chromosome segregation by condensation DNA from both sides of a centrally located replisome during cell division. Not required for mini-F plasmid partitioning. Probably acts via its interaction with MukB and MukE. Overexpression results in anucleate cells. It has a calcium binding activity.</text>
</comment>
<comment type="subunit">
    <text evidence="1">Interacts, and probably forms a ternary complex, with MukE and MukB via its C-terminal region. The complex formation is stimulated by calcium or magnesium. It is required for an interaction between MukE and MukB.</text>
</comment>
<comment type="subcellular location">
    <subcellularLocation>
        <location evidence="1">Cytoplasm</location>
        <location evidence="1">Nucleoid</location>
    </subcellularLocation>
    <text evidence="1">Restricted to the nucleoid region.</text>
</comment>
<comment type="similarity">
    <text evidence="1">Belongs to the MukF family.</text>
</comment>
<evidence type="ECO:0000255" key="1">
    <source>
        <dbReference type="HAMAP-Rule" id="MF_01803"/>
    </source>
</evidence>
<accession>A7ZYM4</accession>
<keyword id="KW-0106">Calcium</keyword>
<keyword id="KW-0131">Cell cycle</keyword>
<keyword id="KW-0132">Cell division</keyword>
<keyword id="KW-0159">Chromosome partition</keyword>
<keyword id="KW-0963">Cytoplasm</keyword>
<keyword id="KW-0226">DNA condensation</keyword>
<sequence length="440" mass="50578">MSEFSQTVPELVAWARKNDFSISLPVDRLSFLLAVATLNGERLDGEMSEGELVDAFRHVSDAFEQTSETIGVRANNAINDMVRQRLLNRFTSEQAEGNAIYRLTPLGIGITDYYIRQREFSTLRLSMQLSIVAGELKRAADAAEEGGDEFHWHRNVYAPLKYSVAEIFDSIDLTQRLMDEQQQQVKDDIAQLLNKDWRAAISSCELLLSETSGTLRELQDTLEAAGDKLQANLLRIQDATMTHDDLHFVDRLVFDLQSKLDRIISWGQQSIDLWIGYDRHVHKFIRTAIDMDKNRVFAQRLRQSVQTYFDEPWALTYANADRLLDMRDEEMALRDEEVTGELPEDLEYEEFNKIREQLAAIIEEQLAVYKTRQVPLDLGLVVREYLSQYPRARHFDVARIVIDQAVRLGVAQADFTGLPAKWQPINDYGAKVQAHVIDKY</sequence>
<protein>
    <recommendedName>
        <fullName evidence="1">Chromosome partition protein MukF</fullName>
    </recommendedName>
</protein>
<name>MUKF_ECOHS</name>